<reference key="1">
    <citation type="journal article" date="1998" name="Nature">
        <title>The complete genome of the hyperthermophilic bacterium Aquifex aeolicus.</title>
        <authorList>
            <person name="Deckert G."/>
            <person name="Warren P.V."/>
            <person name="Gaasterland T."/>
            <person name="Young W.G."/>
            <person name="Lenox A.L."/>
            <person name="Graham D.E."/>
            <person name="Overbeek R."/>
            <person name="Snead M.A."/>
            <person name="Keller M."/>
            <person name="Aujay M."/>
            <person name="Huber R."/>
            <person name="Feldman R.A."/>
            <person name="Short J.M."/>
            <person name="Olsen G.J."/>
            <person name="Swanson R.V."/>
        </authorList>
    </citation>
    <scope>NUCLEOTIDE SEQUENCE [LARGE SCALE GENOMIC DNA]</scope>
    <source>
        <strain>VF5</strain>
    </source>
</reference>
<feature type="chain" id="PRO_0000186999" description="Uncharacterized protein aq_aa28">
    <location>
        <begin position="1"/>
        <end position="151"/>
    </location>
</feature>
<organism>
    <name type="scientific">Aquifex aeolicus (strain VF5)</name>
    <dbReference type="NCBI Taxonomy" id="224324"/>
    <lineage>
        <taxon>Bacteria</taxon>
        <taxon>Pseudomonadati</taxon>
        <taxon>Aquificota</taxon>
        <taxon>Aquificia</taxon>
        <taxon>Aquificales</taxon>
        <taxon>Aquificaceae</taxon>
        <taxon>Aquifex</taxon>
    </lineage>
</organism>
<keyword id="KW-0614">Plasmid</keyword>
<keyword id="KW-1185">Reference proteome</keyword>
<accession>O66419</accession>
<gene>
    <name type="ordered locus">aq_aa28</name>
</gene>
<geneLocation type="plasmid">
    <name>ece1</name>
</geneLocation>
<name>YZ28_AQUAE</name>
<dbReference type="EMBL" id="AE000667">
    <property type="protein sequence ID" value="AAC07971.1"/>
    <property type="molecule type" value="Genomic_DNA"/>
</dbReference>
<dbReference type="RefSeq" id="NP_046419.1">
    <property type="nucleotide sequence ID" value="NC_001880.1"/>
</dbReference>
<dbReference type="EnsemblBacteria" id="AAC07971">
    <property type="protein sequence ID" value="AAC07971"/>
    <property type="gene ID" value="aq_aa28"/>
</dbReference>
<dbReference type="KEGG" id="aae:aq_aa28"/>
<dbReference type="HOGENOM" id="CLU_1727566_0_0_0"/>
<dbReference type="InParanoid" id="O66419"/>
<dbReference type="Proteomes" id="UP000000798">
    <property type="component" value="Plasmid ece1"/>
</dbReference>
<dbReference type="Gene3D" id="3.30.870.10">
    <property type="entry name" value="Endonuclease Chain A"/>
    <property type="match status" value="1"/>
</dbReference>
<protein>
    <recommendedName>
        <fullName>Uncharacterized protein aq_aa28</fullName>
    </recommendedName>
</protein>
<sequence length="151" mass="17559">MGGIMNKQLFSEEPEKDTKKPILSIGEEEIKLLYDIPGKYLRQFNRIKAITFSSLKSILDLLKDYREVEILIGLEEQGRELYNLEVIVEKFLKEGEEISKQAMFKDFSVYYIPNCHTKLYILESEERKIVVAGSGNLSSLAWRGPQEEFFL</sequence>
<proteinExistence type="predicted"/>